<protein>
    <recommendedName>
        <fullName>Ribonuclease S-6</fullName>
        <ecNumber evidence="7">4.6.1.19</ecNumber>
    </recommendedName>
    <alternativeName>
        <fullName>S6-RNase</fullName>
    </alternativeName>
</protein>
<reference key="1">
    <citation type="journal article" date="1998" name="Plant Mol. Biol.">
        <title>Primary structural features of rosaceous S-RNases associated with gametophytic self-incompatibility.</title>
        <authorList>
            <person name="Ishimizu T."/>
            <person name="Shinkawa T."/>
            <person name="Sakiyama F."/>
            <person name="Norioka S."/>
        </authorList>
    </citation>
    <scope>NUCLEOTIDE SEQUENCE [MRNA]</scope>
    <scope>PARTIAL PROTEIN SEQUENCE</scope>
    <source>
        <strain>cv. Imamuraaki</strain>
        <tissue>Style</tissue>
    </source>
</reference>
<reference key="2">
    <citation type="journal article" date="1999" name="Eur. J. Biochem.">
        <title>Presence of asparagine-linked N-acetylglucosamine and chitobiose in Pyrus pyrifolia S-RNases associated with gametophytic self-incompatibility.</title>
        <authorList>
            <person name="Ishimizu T."/>
            <person name="Mitsukami Y."/>
            <person name="Shinkawa T."/>
            <person name="Natsuka S."/>
            <person name="Hase S."/>
            <person name="Miyagi M."/>
            <person name="Sakiyama F."/>
            <person name="Norioka S."/>
        </authorList>
    </citation>
    <scope>GLYCOSYLATION AT ASN-77; ASN-87; ASN-145; ASN-188 AND ASN-203</scope>
    <scope>STRUCTURE OF CARBOHYDRATES</scope>
    <source>
        <strain>cv. Imamuraaki</strain>
        <tissue>Style</tissue>
    </source>
</reference>
<dbReference type="EC" id="4.6.1.19" evidence="7"/>
<dbReference type="EMBL" id="AB002142">
    <property type="protein sequence ID" value="BAA32415.1"/>
    <property type="molecule type" value="mRNA"/>
</dbReference>
<dbReference type="SMR" id="O80324"/>
<dbReference type="iPTMnet" id="O80324"/>
<dbReference type="GO" id="GO:0005576">
    <property type="term" value="C:extracellular region"/>
    <property type="evidence" value="ECO:0007669"/>
    <property type="project" value="TreeGrafter"/>
</dbReference>
<dbReference type="GO" id="GO:0033897">
    <property type="term" value="F:ribonuclease T2 activity"/>
    <property type="evidence" value="ECO:0007669"/>
    <property type="project" value="UniProtKB-EC"/>
</dbReference>
<dbReference type="GO" id="GO:0003723">
    <property type="term" value="F:RNA binding"/>
    <property type="evidence" value="ECO:0007669"/>
    <property type="project" value="InterPro"/>
</dbReference>
<dbReference type="GO" id="GO:0006401">
    <property type="term" value="P:RNA catabolic process"/>
    <property type="evidence" value="ECO:0007669"/>
    <property type="project" value="TreeGrafter"/>
</dbReference>
<dbReference type="CDD" id="cd01061">
    <property type="entry name" value="RNase_T2_euk"/>
    <property type="match status" value="1"/>
</dbReference>
<dbReference type="Gene3D" id="3.90.730.10">
    <property type="entry name" value="Ribonuclease T2-like"/>
    <property type="match status" value="1"/>
</dbReference>
<dbReference type="InterPro" id="IPR033697">
    <property type="entry name" value="Ribonuclease_T2_eukaryotic"/>
</dbReference>
<dbReference type="InterPro" id="IPR001568">
    <property type="entry name" value="RNase_T2-like"/>
</dbReference>
<dbReference type="InterPro" id="IPR036430">
    <property type="entry name" value="RNase_T2-like_sf"/>
</dbReference>
<dbReference type="InterPro" id="IPR018188">
    <property type="entry name" value="RNase_T2_His_AS_1"/>
</dbReference>
<dbReference type="PANTHER" id="PTHR11240:SF75">
    <property type="entry name" value="RIBONUCLEASE 3"/>
    <property type="match status" value="1"/>
</dbReference>
<dbReference type="PANTHER" id="PTHR11240">
    <property type="entry name" value="RIBONUCLEASE T2"/>
    <property type="match status" value="1"/>
</dbReference>
<dbReference type="Pfam" id="PF00445">
    <property type="entry name" value="Ribonuclease_T2"/>
    <property type="match status" value="1"/>
</dbReference>
<dbReference type="SUPFAM" id="SSF55895">
    <property type="entry name" value="Ribonuclease Rh-like"/>
    <property type="match status" value="1"/>
</dbReference>
<dbReference type="PROSITE" id="PS00530">
    <property type="entry name" value="RNASE_T2_1"/>
    <property type="match status" value="1"/>
</dbReference>
<keyword id="KW-0903">Direct protein sequencing</keyword>
<keyword id="KW-1015">Disulfide bond</keyword>
<keyword id="KW-0255">Endonuclease</keyword>
<keyword id="KW-0325">Glycoprotein</keyword>
<keyword id="KW-0378">Hydrolase</keyword>
<keyword id="KW-0456">Lyase</keyword>
<keyword id="KW-0540">Nuclease</keyword>
<keyword id="KW-0732">Signal</keyword>
<proteinExistence type="evidence at protein level"/>
<sequence>MGITGMIYMVPMVFSLIVLISCSSTMGYNYFQFTQQYQPAVCNSNPTPCKDPPDKLFTVHGLWPSNDVGDDPIYCKNKTIKSQQIGNLTAQLIIIWPNVLDRTDHVGFWNRQWNKHGSCGKAPTIKDEMHYFKTVIKMYITQKQNVSEILSRAKIEPEGKIRRRDDIINAIRLGTKDKKPKLKCQKNNQTTELVEITICSDRNLTQFIDCPRSSFKGSPFHCPTNHILY</sequence>
<comment type="function">
    <text>Self-incompatibility (SI) is the inherited ability of a flowering plant to prevent self-fertilization by discriminating between self and non-self pollen during pollination. In many species, self-incompatibility is controlled by the single, multiallelic locus S.</text>
</comment>
<comment type="catalytic activity">
    <reaction evidence="6">
        <text>a ribonucleotidyl-ribonucleotide-RNA + H2O = a 3'-end 3'-phospho-ribonucleotide-RNA + a 5'-end dephospho-ribonucleoside-RNA + H(+)</text>
        <dbReference type="Rhea" id="RHEA:68052"/>
        <dbReference type="Rhea" id="RHEA-COMP:10463"/>
        <dbReference type="Rhea" id="RHEA-COMP:13936"/>
        <dbReference type="Rhea" id="RHEA-COMP:17355"/>
        <dbReference type="ChEBI" id="CHEBI:15377"/>
        <dbReference type="ChEBI" id="CHEBI:15378"/>
        <dbReference type="ChEBI" id="CHEBI:83062"/>
        <dbReference type="ChEBI" id="CHEBI:138284"/>
        <dbReference type="ChEBI" id="CHEBI:173118"/>
        <dbReference type="EC" id="4.6.1.19"/>
    </reaction>
</comment>
<comment type="PTM">
    <text>The N-glycans attached at Asn-188 and Asn-203 consist of either monosaccharide (GlcNAc) or disaccharide (GlcNAc-GlcNAc) that could not be distinguished.</text>
</comment>
<comment type="similarity">
    <text evidence="9">Belongs to the RNase T2 family.</text>
</comment>
<comment type="caution">
    <text evidence="9">Gln-112 is present instead of the conserved Glu which is expected to act as an active site proton donor.</text>
</comment>
<accession>O80324</accession>
<evidence type="ECO:0000250" key="1">
    <source>
        <dbReference type="UniProtKB" id="P08056"/>
    </source>
</evidence>
<evidence type="ECO:0000250" key="2">
    <source>
        <dbReference type="UniProtKB" id="P23540"/>
    </source>
</evidence>
<evidence type="ECO:0000250" key="3">
    <source>
        <dbReference type="UniProtKB" id="Q7SID5"/>
    </source>
</evidence>
<evidence type="ECO:0000255" key="4"/>
<evidence type="ECO:0000255" key="5">
    <source>
        <dbReference type="PROSITE-ProRule" id="PRU00498"/>
    </source>
</evidence>
<evidence type="ECO:0000255" key="6">
    <source>
        <dbReference type="PROSITE-ProRule" id="PRU10045"/>
    </source>
</evidence>
<evidence type="ECO:0000255" key="7">
    <source>
        <dbReference type="PROSITE-ProRule" id="PRU10046"/>
    </source>
</evidence>
<evidence type="ECO:0000269" key="8">
    <source>
    </source>
</evidence>
<evidence type="ECO:0000305" key="9"/>
<name>RNS6_PYRPY</name>
<organism>
    <name type="scientific">Pyrus pyrifolia</name>
    <name type="common">Chinese pear</name>
    <name type="synonym">Pyrus serotina</name>
    <dbReference type="NCBI Taxonomy" id="3767"/>
    <lineage>
        <taxon>Eukaryota</taxon>
        <taxon>Viridiplantae</taxon>
        <taxon>Streptophyta</taxon>
        <taxon>Embryophyta</taxon>
        <taxon>Tracheophyta</taxon>
        <taxon>Spermatophyta</taxon>
        <taxon>Magnoliopsida</taxon>
        <taxon>eudicotyledons</taxon>
        <taxon>Gunneridae</taxon>
        <taxon>Pentapetalae</taxon>
        <taxon>rosids</taxon>
        <taxon>fabids</taxon>
        <taxon>Rosales</taxon>
        <taxon>Rosaceae</taxon>
        <taxon>Amygdaloideae</taxon>
        <taxon>Maleae</taxon>
        <taxon>Pyrus</taxon>
    </lineage>
</organism>
<feature type="signal peptide" evidence="4">
    <location>
        <begin position="1"/>
        <end position="27"/>
    </location>
</feature>
<feature type="chain" id="PRO_0000030982" description="Ribonuclease S-6">
    <location>
        <begin position="28"/>
        <end position="229"/>
    </location>
</feature>
<feature type="active site" description="Proton donor" evidence="3 6">
    <location>
        <position position="60"/>
    </location>
</feature>
<feature type="active site" evidence="1">
    <location>
        <position position="112"/>
    </location>
</feature>
<feature type="active site" description="Proton acceptor" evidence="3 6">
    <location>
        <position position="116"/>
    </location>
</feature>
<feature type="binding site" evidence="2">
    <location>
        <position position="36"/>
    </location>
    <ligand>
        <name>RNA</name>
        <dbReference type="ChEBI" id="CHEBI:33697"/>
    </ligand>
    <ligandPart>
        <name>a 3'-terminal ribonucleotide 3'-phosphate residue</name>
        <dbReference type="ChEBI" id="CHEBI:83062"/>
    </ligandPart>
</feature>
<feature type="binding site" evidence="2">
    <location>
        <position position="60"/>
    </location>
    <ligand>
        <name>RNA</name>
        <dbReference type="ChEBI" id="CHEBI:33697"/>
    </ligand>
    <ligandPart>
        <name>a 3'-terminal ribonucleotide 3'-phosphate residue</name>
        <dbReference type="ChEBI" id="CHEBI:83062"/>
    </ligandPart>
</feature>
<feature type="binding site" evidence="2">
    <location>
        <begin position="98"/>
        <end position="99"/>
    </location>
    <ligand>
        <name>RNA</name>
        <dbReference type="ChEBI" id="CHEBI:33697"/>
    </ligand>
    <ligandPart>
        <name>a 3'-terminal ribonucleotide 3'-phosphate residue</name>
        <dbReference type="ChEBI" id="CHEBI:83062"/>
    </ligandPart>
</feature>
<feature type="binding site" evidence="2">
    <location>
        <position position="108"/>
    </location>
    <ligand>
        <name>RNA</name>
        <dbReference type="ChEBI" id="CHEBI:33697"/>
    </ligand>
    <ligandPart>
        <name>a 3'-terminal ribonucleotide 3'-phosphate residue</name>
        <dbReference type="ChEBI" id="CHEBI:83062"/>
    </ligandPart>
</feature>
<feature type="binding site" evidence="2">
    <location>
        <begin position="111"/>
        <end position="112"/>
    </location>
    <ligand>
        <name>RNA</name>
        <dbReference type="ChEBI" id="CHEBI:33697"/>
    </ligand>
    <ligandPart>
        <name>a 3'-terminal ribonucleotide 3'-phosphate residue</name>
        <dbReference type="ChEBI" id="CHEBI:83062"/>
    </ligandPart>
</feature>
<feature type="binding site" evidence="2">
    <location>
        <begin position="115"/>
        <end position="116"/>
    </location>
    <ligand>
        <name>RNA</name>
        <dbReference type="ChEBI" id="CHEBI:33697"/>
    </ligand>
    <ligandPart>
        <name>a 3'-terminal ribonucleotide 3'-phosphate residue</name>
        <dbReference type="ChEBI" id="CHEBI:83062"/>
    </ligandPart>
</feature>
<feature type="glycosylation site" description="N-linked (GlcNAc) asparagine" evidence="5 8">
    <location>
        <position position="77"/>
    </location>
</feature>
<feature type="glycosylation site" description="N-linked (GlcNAc) asparagine" evidence="5 8">
    <location>
        <position position="87"/>
    </location>
</feature>
<feature type="glycosylation site" description="N-linked (GlcNAc...) (high mannose) asparagine" evidence="5 8">
    <location>
        <position position="145"/>
    </location>
</feature>
<feature type="glycosylation site" description="N-linked (GlcNAc) asparagine; alternate" evidence="5 8">
    <location>
        <position position="188"/>
    </location>
</feature>
<feature type="glycosylation site" description="N-linked (GlcNAc...) asparagine; alternate" evidence="5 8">
    <location>
        <position position="188"/>
    </location>
</feature>
<feature type="glycosylation site" description="N-linked (GlcNAc...) asparagine; alternate" evidence="5 8">
    <location>
        <position position="203"/>
    </location>
</feature>
<feature type="disulfide bond" evidence="3">
    <location>
        <begin position="42"/>
        <end position="49"/>
    </location>
</feature>
<feature type="disulfide bond" evidence="1">
    <location>
        <begin position="75"/>
        <end position="119"/>
    </location>
</feature>
<feature type="disulfide bond" evidence="1">
    <location>
        <begin position="184"/>
        <end position="222"/>
    </location>
</feature>
<feature type="disulfide bond" evidence="2">
    <location>
        <begin position="199"/>
        <end position="210"/>
    </location>
</feature>